<protein>
    <recommendedName>
        <fullName>Probable calcium-binding protein CML49</fullName>
    </recommendedName>
    <alternativeName>
        <fullName>Calmodulin-like protein 49</fullName>
    </alternativeName>
</protein>
<keyword id="KW-0025">Alternative splicing</keyword>
<keyword id="KW-0106">Calcium</keyword>
<keyword id="KW-0479">Metal-binding</keyword>
<keyword id="KW-1185">Reference proteome</keyword>
<keyword id="KW-0677">Repeat</keyword>
<reference key="1">
    <citation type="journal article" date="2000" name="Nature">
        <title>Sequence and analysis of chromosome 3 of the plant Arabidopsis thaliana.</title>
        <authorList>
            <person name="Salanoubat M."/>
            <person name="Lemcke K."/>
            <person name="Rieger M."/>
            <person name="Ansorge W."/>
            <person name="Unseld M."/>
            <person name="Fartmann B."/>
            <person name="Valle G."/>
            <person name="Bloecker H."/>
            <person name="Perez-Alonso M."/>
            <person name="Obermaier B."/>
            <person name="Delseny M."/>
            <person name="Boutry M."/>
            <person name="Grivell L.A."/>
            <person name="Mache R."/>
            <person name="Puigdomenech P."/>
            <person name="De Simone V."/>
            <person name="Choisne N."/>
            <person name="Artiguenave F."/>
            <person name="Robert C."/>
            <person name="Brottier P."/>
            <person name="Wincker P."/>
            <person name="Cattolico L."/>
            <person name="Weissenbach J."/>
            <person name="Saurin W."/>
            <person name="Quetier F."/>
            <person name="Schaefer M."/>
            <person name="Mueller-Auer S."/>
            <person name="Gabel C."/>
            <person name="Fuchs M."/>
            <person name="Benes V."/>
            <person name="Wurmbach E."/>
            <person name="Drzonek H."/>
            <person name="Erfle H."/>
            <person name="Jordan N."/>
            <person name="Bangert S."/>
            <person name="Wiedelmann R."/>
            <person name="Kranz H."/>
            <person name="Voss H."/>
            <person name="Holland R."/>
            <person name="Brandt P."/>
            <person name="Nyakatura G."/>
            <person name="Vezzi A."/>
            <person name="D'Angelo M."/>
            <person name="Pallavicini A."/>
            <person name="Toppo S."/>
            <person name="Simionati B."/>
            <person name="Conrad A."/>
            <person name="Hornischer K."/>
            <person name="Kauer G."/>
            <person name="Loehnert T.-H."/>
            <person name="Nordsiek G."/>
            <person name="Reichelt J."/>
            <person name="Scharfe M."/>
            <person name="Schoen O."/>
            <person name="Bargues M."/>
            <person name="Terol J."/>
            <person name="Climent J."/>
            <person name="Navarro P."/>
            <person name="Collado C."/>
            <person name="Perez-Perez A."/>
            <person name="Ottenwaelder B."/>
            <person name="Duchemin D."/>
            <person name="Cooke R."/>
            <person name="Laudie M."/>
            <person name="Berger-Llauro C."/>
            <person name="Purnelle B."/>
            <person name="Masuy D."/>
            <person name="de Haan M."/>
            <person name="Maarse A.C."/>
            <person name="Alcaraz J.-P."/>
            <person name="Cottet A."/>
            <person name="Casacuberta E."/>
            <person name="Monfort A."/>
            <person name="Argiriou A."/>
            <person name="Flores M."/>
            <person name="Liguori R."/>
            <person name="Vitale D."/>
            <person name="Mannhaupt G."/>
            <person name="Haase D."/>
            <person name="Schoof H."/>
            <person name="Rudd S."/>
            <person name="Zaccaria P."/>
            <person name="Mewes H.-W."/>
            <person name="Mayer K.F.X."/>
            <person name="Kaul S."/>
            <person name="Town C.D."/>
            <person name="Koo H.L."/>
            <person name="Tallon L.J."/>
            <person name="Jenkins J."/>
            <person name="Rooney T."/>
            <person name="Rizzo M."/>
            <person name="Walts A."/>
            <person name="Utterback T."/>
            <person name="Fujii C.Y."/>
            <person name="Shea T.P."/>
            <person name="Creasy T.H."/>
            <person name="Haas B."/>
            <person name="Maiti R."/>
            <person name="Wu D."/>
            <person name="Peterson J."/>
            <person name="Van Aken S."/>
            <person name="Pai G."/>
            <person name="Militscher J."/>
            <person name="Sellers P."/>
            <person name="Gill J.E."/>
            <person name="Feldblyum T.V."/>
            <person name="Preuss D."/>
            <person name="Lin X."/>
            <person name="Nierman W.C."/>
            <person name="Salzberg S.L."/>
            <person name="White O."/>
            <person name="Venter J.C."/>
            <person name="Fraser C.M."/>
            <person name="Kaneko T."/>
            <person name="Nakamura Y."/>
            <person name="Sato S."/>
            <person name="Kato T."/>
            <person name="Asamizu E."/>
            <person name="Sasamoto S."/>
            <person name="Kimura T."/>
            <person name="Idesawa K."/>
            <person name="Kawashima K."/>
            <person name="Kishida Y."/>
            <person name="Kiyokawa C."/>
            <person name="Kohara M."/>
            <person name="Matsumoto M."/>
            <person name="Matsuno A."/>
            <person name="Muraki A."/>
            <person name="Nakayama S."/>
            <person name="Nakazaki N."/>
            <person name="Shinpo S."/>
            <person name="Takeuchi C."/>
            <person name="Wada T."/>
            <person name="Watanabe A."/>
            <person name="Yamada M."/>
            <person name="Yasuda M."/>
            <person name="Tabata S."/>
        </authorList>
    </citation>
    <scope>NUCLEOTIDE SEQUENCE [LARGE SCALE GENOMIC DNA]</scope>
    <source>
        <strain>cv. Columbia</strain>
    </source>
</reference>
<reference key="2">
    <citation type="journal article" date="2017" name="Plant J.">
        <title>Araport11: a complete reannotation of the Arabidopsis thaliana reference genome.</title>
        <authorList>
            <person name="Cheng C.Y."/>
            <person name="Krishnakumar V."/>
            <person name="Chan A.P."/>
            <person name="Thibaud-Nissen F."/>
            <person name="Schobel S."/>
            <person name="Town C.D."/>
        </authorList>
    </citation>
    <scope>GENOME REANNOTATION</scope>
    <source>
        <strain>cv. Columbia</strain>
    </source>
</reference>
<reference key="3">
    <citation type="journal article" date="2003" name="Science">
        <title>Empirical analysis of transcriptional activity in the Arabidopsis genome.</title>
        <authorList>
            <person name="Yamada K."/>
            <person name="Lim J."/>
            <person name="Dale J.M."/>
            <person name="Chen H."/>
            <person name="Shinn P."/>
            <person name="Palm C.J."/>
            <person name="Southwick A.M."/>
            <person name="Wu H.C."/>
            <person name="Kim C.J."/>
            <person name="Nguyen M."/>
            <person name="Pham P.K."/>
            <person name="Cheuk R.F."/>
            <person name="Karlin-Newmann G."/>
            <person name="Liu S.X."/>
            <person name="Lam B."/>
            <person name="Sakano H."/>
            <person name="Wu T."/>
            <person name="Yu G."/>
            <person name="Miranda M."/>
            <person name="Quach H.L."/>
            <person name="Tripp M."/>
            <person name="Chang C.H."/>
            <person name="Lee J.M."/>
            <person name="Toriumi M.J."/>
            <person name="Chan M.M."/>
            <person name="Tang C.C."/>
            <person name="Onodera C.S."/>
            <person name="Deng J.M."/>
            <person name="Akiyama K."/>
            <person name="Ansari Y."/>
            <person name="Arakawa T."/>
            <person name="Banh J."/>
            <person name="Banno F."/>
            <person name="Bowser L."/>
            <person name="Brooks S.Y."/>
            <person name="Carninci P."/>
            <person name="Chao Q."/>
            <person name="Choy N."/>
            <person name="Enju A."/>
            <person name="Goldsmith A.D."/>
            <person name="Gurjal M."/>
            <person name="Hansen N.F."/>
            <person name="Hayashizaki Y."/>
            <person name="Johnson-Hopson C."/>
            <person name="Hsuan V.W."/>
            <person name="Iida K."/>
            <person name="Karnes M."/>
            <person name="Khan S."/>
            <person name="Koesema E."/>
            <person name="Ishida J."/>
            <person name="Jiang P.X."/>
            <person name="Jones T."/>
            <person name="Kawai J."/>
            <person name="Kamiya A."/>
            <person name="Meyers C."/>
            <person name="Nakajima M."/>
            <person name="Narusaka M."/>
            <person name="Seki M."/>
            <person name="Sakurai T."/>
            <person name="Satou M."/>
            <person name="Tamse R."/>
            <person name="Vaysberg M."/>
            <person name="Wallender E.K."/>
            <person name="Wong C."/>
            <person name="Yamamura Y."/>
            <person name="Yuan S."/>
            <person name="Shinozaki K."/>
            <person name="Davis R.W."/>
            <person name="Theologis A."/>
            <person name="Ecker J.R."/>
        </authorList>
    </citation>
    <scope>NUCLEOTIDE SEQUENCE [LARGE SCALE MRNA] (ISOFORM 1)</scope>
    <source>
        <strain>cv. Columbia</strain>
    </source>
</reference>
<reference key="4">
    <citation type="submission" date="2004-08" db="EMBL/GenBank/DDBJ databases">
        <title>Arabidopsis ORF clones.</title>
        <authorList>
            <person name="Kim C.J."/>
            <person name="Chen H."/>
            <person name="Cheuk R.F."/>
            <person name="Shinn P."/>
            <person name="Ecker J.R."/>
        </authorList>
    </citation>
    <scope>NUCLEOTIDE SEQUENCE [LARGE SCALE MRNA] (ISOFORM 1)</scope>
    <source>
        <strain>cv. Columbia</strain>
    </source>
</reference>
<reference key="5">
    <citation type="journal article" date="2003" name="New Phytol.">
        <title>Calmodulins and related potential calcium sensors of Arabidopsis.</title>
        <authorList>
            <person name="McCormack E."/>
            <person name="Braam J."/>
        </authorList>
    </citation>
    <scope>GENE FAMILY</scope>
    <scope>NOMENCLATURE</scope>
</reference>
<reference key="6">
    <citation type="journal article" date="2005" name="New Phytol.">
        <title>Genome-wide identification of touch- and darkness-regulated Arabidopsis genes: a focus on calmodulin-like and XTH genes.</title>
        <authorList>
            <person name="Lee D."/>
            <person name="Polisensky D.H."/>
            <person name="Braam J."/>
        </authorList>
    </citation>
    <scope>INDUCTION</scope>
</reference>
<accession>Q8W4L0</accession>
<accession>Q2V3X2</accession>
<accession>Q3E6V8</accession>
<accession>Q9SS41</accession>
<feature type="chain" id="PRO_0000342972" description="Probable calcium-binding protein CML49">
    <location>
        <begin position="1"/>
        <end position="335"/>
    </location>
</feature>
<feature type="domain" description="EF-hand 1" evidence="2">
    <location>
        <begin position="164"/>
        <end position="199"/>
    </location>
</feature>
<feature type="domain" description="EF-hand 2" evidence="2">
    <location>
        <begin position="230"/>
        <end position="265"/>
    </location>
</feature>
<feature type="region of interest" description="Disordered" evidence="3">
    <location>
        <begin position="1"/>
        <end position="154"/>
    </location>
</feature>
<feature type="compositionally biased region" description="Low complexity" evidence="3">
    <location>
        <begin position="1"/>
        <end position="10"/>
    </location>
</feature>
<feature type="compositionally biased region" description="Pro residues" evidence="3">
    <location>
        <begin position="30"/>
        <end position="45"/>
    </location>
</feature>
<feature type="compositionally biased region" description="Low complexity" evidence="3">
    <location>
        <begin position="46"/>
        <end position="63"/>
    </location>
</feature>
<feature type="compositionally biased region" description="Gly residues" evidence="3">
    <location>
        <begin position="110"/>
        <end position="141"/>
    </location>
</feature>
<feature type="binding site" evidence="2">
    <location>
        <position position="177"/>
    </location>
    <ligand>
        <name>Ca(2+)</name>
        <dbReference type="ChEBI" id="CHEBI:29108"/>
        <label>1</label>
    </ligand>
</feature>
<feature type="binding site" evidence="2">
    <location>
        <position position="179"/>
    </location>
    <ligand>
        <name>Ca(2+)</name>
        <dbReference type="ChEBI" id="CHEBI:29108"/>
        <label>1</label>
    </ligand>
</feature>
<feature type="binding site" evidence="2">
    <location>
        <position position="181"/>
    </location>
    <ligand>
        <name>Ca(2+)</name>
        <dbReference type="ChEBI" id="CHEBI:29108"/>
        <label>1</label>
    </ligand>
</feature>
<feature type="binding site" evidence="2">
    <location>
        <position position="188"/>
    </location>
    <ligand>
        <name>Ca(2+)</name>
        <dbReference type="ChEBI" id="CHEBI:29108"/>
        <label>1</label>
    </ligand>
</feature>
<feature type="binding site" evidence="2">
    <location>
        <position position="243"/>
    </location>
    <ligand>
        <name>Ca(2+)</name>
        <dbReference type="ChEBI" id="CHEBI:29108"/>
        <label>2</label>
    </ligand>
</feature>
<feature type="binding site" evidence="2">
    <location>
        <position position="245"/>
    </location>
    <ligand>
        <name>Ca(2+)</name>
        <dbReference type="ChEBI" id="CHEBI:29108"/>
        <label>2</label>
    </ligand>
</feature>
<feature type="binding site" evidence="2">
    <location>
        <position position="247"/>
    </location>
    <ligand>
        <name>Ca(2+)</name>
        <dbReference type="ChEBI" id="CHEBI:29108"/>
        <label>2</label>
    </ligand>
</feature>
<feature type="binding site" evidence="2">
    <location>
        <position position="249"/>
    </location>
    <ligand>
        <name>Ca(2+)</name>
        <dbReference type="ChEBI" id="CHEBI:29108"/>
        <label>2</label>
    </ligand>
</feature>
<feature type="binding site" evidence="2">
    <location>
        <position position="254"/>
    </location>
    <ligand>
        <name>Ca(2+)</name>
        <dbReference type="ChEBI" id="CHEBI:29108"/>
        <label>2</label>
    </ligand>
</feature>
<feature type="splice variant" id="VSP_034557" description="In isoform 3." evidence="5">
    <original>PKEFTSLFFSL</original>
    <variation>QFLLSFKLISN</variation>
    <location>
        <begin position="222"/>
        <end position="232"/>
    </location>
</feature>
<feature type="splice variant" id="VSP_034558" description="In isoform 3." evidence="5">
    <location>
        <begin position="233"/>
        <end position="335"/>
    </location>
</feature>
<feature type="splice variant" id="VSP_034559" description="In isoform 4." evidence="5">
    <original>CCLTVKGLTEKFKEKDTALSGSAIFNYENFMLTVLPFLVA</original>
    <variation>YVHSGSPRSSRRRIRRYQAQLFSITRTSCSLFYHSSSLE</variation>
    <location>
        <begin position="296"/>
        <end position="335"/>
    </location>
</feature>
<feature type="splice variant" id="VSP_034560" description="In isoform 2." evidence="5">
    <original>CCLTVKGLTEKFKEKDTALSGSAIFNYEN</original>
    <variation>YVHSFQPPYLFLLCNKYNSSLILVYFPLM</variation>
    <location>
        <begin position="296"/>
        <end position="324"/>
    </location>
</feature>
<feature type="splice variant" id="VSP_034561" description="In isoform 2." evidence="5">
    <location>
        <begin position="325"/>
        <end position="335"/>
    </location>
</feature>
<name>CML49_ARATH</name>
<evidence type="ECO:0000250" key="1"/>
<evidence type="ECO:0000255" key="2">
    <source>
        <dbReference type="PROSITE-ProRule" id="PRU00448"/>
    </source>
</evidence>
<evidence type="ECO:0000256" key="3">
    <source>
        <dbReference type="SAM" id="MobiDB-lite"/>
    </source>
</evidence>
<evidence type="ECO:0000269" key="4">
    <source>
    </source>
</evidence>
<evidence type="ECO:0000305" key="5"/>
<sequence length="335" mass="35302">MSGYPPSSQGYGYGGNPPPPQPPYGSTGNNPPPYGSSGSNPPPPYGSSASSPYAVPYGAQPAPYGAPPSAPYASLPGDHNKPHKEKPHGASYGSPSPGGYGAHPSSGPSDYGGYGGAPQQSGHGGGYGGAPQQSGHGGGYGAPPPQASYGSPFASLVPSAFPPGTDPNIVACFQAADRDNSGFIDDKELQGALSSYNQSFSIRTVHLLMYLFTNSNVRKIGPKEFTSLFFSLQNWRSIFERFDKDRSGRIDTNELRDALMSLGFSVSPVILDLLVSKFDKSGGRNRAIEYDNFIECCLTVKGLTEKFKEKDTALSGSAIFNYENFMLTVLPFLVA</sequence>
<dbReference type="EMBL" id="AC009400">
    <property type="protein sequence ID" value="AAF02826.1"/>
    <property type="status" value="ALT_SEQ"/>
    <property type="molecule type" value="Genomic_DNA"/>
</dbReference>
<dbReference type="EMBL" id="CP002686">
    <property type="protein sequence ID" value="AEE74885.1"/>
    <property type="molecule type" value="Genomic_DNA"/>
</dbReference>
<dbReference type="EMBL" id="CP002686">
    <property type="protein sequence ID" value="AEE74886.1"/>
    <property type="molecule type" value="Genomic_DNA"/>
</dbReference>
<dbReference type="EMBL" id="CP002686">
    <property type="protein sequence ID" value="AEE74887.1"/>
    <property type="molecule type" value="Genomic_DNA"/>
</dbReference>
<dbReference type="EMBL" id="CP002686">
    <property type="protein sequence ID" value="AEE74888.1"/>
    <property type="molecule type" value="Genomic_DNA"/>
</dbReference>
<dbReference type="EMBL" id="AY062498">
    <property type="protein sequence ID" value="AAL32576.1"/>
    <property type="molecule type" value="mRNA"/>
</dbReference>
<dbReference type="EMBL" id="BT015172">
    <property type="protein sequence ID" value="AAT85768.1"/>
    <property type="molecule type" value="mRNA"/>
</dbReference>
<dbReference type="RefSeq" id="NP_001030668.1">
    <molecule id="Q8W4L0-4"/>
    <property type="nucleotide sequence ID" value="NM_001035591.2"/>
</dbReference>
<dbReference type="RefSeq" id="NP_187641.2">
    <molecule id="Q8W4L0-1"/>
    <property type="nucleotide sequence ID" value="NM_111865.7"/>
</dbReference>
<dbReference type="RefSeq" id="NP_850997.1">
    <molecule id="Q8W4L0-3"/>
    <property type="nucleotide sequence ID" value="NM_180666.4"/>
</dbReference>
<dbReference type="RefSeq" id="NP_850998.1">
    <molecule id="Q8W4L0-2"/>
    <property type="nucleotide sequence ID" value="NM_180667.4"/>
</dbReference>
<dbReference type="SMR" id="Q8W4L0"/>
<dbReference type="FunCoup" id="Q8W4L0">
    <property type="interactions" value="2872"/>
</dbReference>
<dbReference type="STRING" id="3702.Q8W4L0"/>
<dbReference type="PaxDb" id="3702-AT3G10300.3"/>
<dbReference type="EnsemblPlants" id="AT3G10300.1">
    <molecule id="Q8W4L0-3"/>
    <property type="protein sequence ID" value="AT3G10300.1"/>
    <property type="gene ID" value="AT3G10300"/>
</dbReference>
<dbReference type="EnsemblPlants" id="AT3G10300.2">
    <molecule id="Q8W4L0-2"/>
    <property type="protein sequence ID" value="AT3G10300.2"/>
    <property type="gene ID" value="AT3G10300"/>
</dbReference>
<dbReference type="EnsemblPlants" id="AT3G10300.3">
    <molecule id="Q8W4L0-1"/>
    <property type="protein sequence ID" value="AT3G10300.3"/>
    <property type="gene ID" value="AT3G10300"/>
</dbReference>
<dbReference type="EnsemblPlants" id="AT3G10300.4">
    <molecule id="Q8W4L0-4"/>
    <property type="protein sequence ID" value="AT3G10300.4"/>
    <property type="gene ID" value="AT3G10300"/>
</dbReference>
<dbReference type="GeneID" id="820192"/>
<dbReference type="Gramene" id="AT3G10300.1">
    <molecule id="Q8W4L0-3"/>
    <property type="protein sequence ID" value="AT3G10300.1"/>
    <property type="gene ID" value="AT3G10300"/>
</dbReference>
<dbReference type="Gramene" id="AT3G10300.2">
    <molecule id="Q8W4L0-2"/>
    <property type="protein sequence ID" value="AT3G10300.2"/>
    <property type="gene ID" value="AT3G10300"/>
</dbReference>
<dbReference type="Gramene" id="AT3G10300.3">
    <molecule id="Q8W4L0-1"/>
    <property type="protein sequence ID" value="AT3G10300.3"/>
    <property type="gene ID" value="AT3G10300"/>
</dbReference>
<dbReference type="Gramene" id="AT3G10300.4">
    <molecule id="Q8W4L0-4"/>
    <property type="protein sequence ID" value="AT3G10300.4"/>
    <property type="gene ID" value="AT3G10300"/>
</dbReference>
<dbReference type="KEGG" id="ath:AT3G10300"/>
<dbReference type="Araport" id="AT3G10300"/>
<dbReference type="TAIR" id="AT3G10300"/>
<dbReference type="eggNOG" id="KOG0037">
    <property type="taxonomic scope" value="Eukaryota"/>
</dbReference>
<dbReference type="HOGENOM" id="CLU_051357_3_0_1"/>
<dbReference type="InParanoid" id="Q8W4L0"/>
<dbReference type="OMA" id="NGAYSPF"/>
<dbReference type="PhylomeDB" id="Q8W4L0"/>
<dbReference type="PRO" id="PR:Q8W4L0"/>
<dbReference type="Proteomes" id="UP000006548">
    <property type="component" value="Chromosome 3"/>
</dbReference>
<dbReference type="ExpressionAtlas" id="Q8W4L0">
    <property type="expression patterns" value="baseline and differential"/>
</dbReference>
<dbReference type="GO" id="GO:0005509">
    <property type="term" value="F:calcium ion binding"/>
    <property type="evidence" value="ECO:0007669"/>
    <property type="project" value="InterPro"/>
</dbReference>
<dbReference type="CDD" id="cd16180">
    <property type="entry name" value="EFh_PEF_Group_I"/>
    <property type="match status" value="1"/>
</dbReference>
<dbReference type="Gene3D" id="1.10.238.10">
    <property type="entry name" value="EF-hand"/>
    <property type="match status" value="1"/>
</dbReference>
<dbReference type="InterPro" id="IPR044590">
    <property type="entry name" value="CML48/49/50"/>
</dbReference>
<dbReference type="InterPro" id="IPR011992">
    <property type="entry name" value="EF-hand-dom_pair"/>
</dbReference>
<dbReference type="InterPro" id="IPR018247">
    <property type="entry name" value="EF_Hand_1_Ca_BS"/>
</dbReference>
<dbReference type="InterPro" id="IPR002048">
    <property type="entry name" value="EF_hand_dom"/>
</dbReference>
<dbReference type="PANTHER" id="PTHR46824">
    <property type="entry name" value="CALCIUM-BINDING PROTEIN CML48-RELATED"/>
    <property type="match status" value="1"/>
</dbReference>
<dbReference type="PANTHER" id="PTHR46824:SF1">
    <property type="entry name" value="CALCIUM-BINDING PROTEIN CML49-RELATED"/>
    <property type="match status" value="1"/>
</dbReference>
<dbReference type="Pfam" id="PF13202">
    <property type="entry name" value="EF-hand_5"/>
    <property type="match status" value="1"/>
</dbReference>
<dbReference type="Pfam" id="PF13499">
    <property type="entry name" value="EF-hand_7"/>
    <property type="match status" value="1"/>
</dbReference>
<dbReference type="SMART" id="SM00054">
    <property type="entry name" value="EFh"/>
    <property type="match status" value="2"/>
</dbReference>
<dbReference type="SUPFAM" id="SSF47473">
    <property type="entry name" value="EF-hand"/>
    <property type="match status" value="1"/>
</dbReference>
<dbReference type="PROSITE" id="PS00018">
    <property type="entry name" value="EF_HAND_1"/>
    <property type="match status" value="2"/>
</dbReference>
<dbReference type="PROSITE" id="PS50222">
    <property type="entry name" value="EF_HAND_2"/>
    <property type="match status" value="2"/>
</dbReference>
<organism>
    <name type="scientific">Arabidopsis thaliana</name>
    <name type="common">Mouse-ear cress</name>
    <dbReference type="NCBI Taxonomy" id="3702"/>
    <lineage>
        <taxon>Eukaryota</taxon>
        <taxon>Viridiplantae</taxon>
        <taxon>Streptophyta</taxon>
        <taxon>Embryophyta</taxon>
        <taxon>Tracheophyta</taxon>
        <taxon>Spermatophyta</taxon>
        <taxon>Magnoliopsida</taxon>
        <taxon>eudicotyledons</taxon>
        <taxon>Gunneridae</taxon>
        <taxon>Pentapetalae</taxon>
        <taxon>rosids</taxon>
        <taxon>malvids</taxon>
        <taxon>Brassicales</taxon>
        <taxon>Brassicaceae</taxon>
        <taxon>Camelineae</taxon>
        <taxon>Arabidopsis</taxon>
    </lineage>
</organism>
<comment type="function">
    <text evidence="1">Potential calcium sensor.</text>
</comment>
<comment type="alternative products">
    <event type="alternative splicing"/>
    <isoform>
        <id>Q8W4L0-1</id>
        <name>1</name>
        <sequence type="displayed"/>
    </isoform>
    <isoform>
        <id>Q8W4L0-2</id>
        <name>2</name>
        <sequence type="described" ref="VSP_034560 VSP_034561"/>
    </isoform>
    <isoform>
        <id>Q8W4L0-3</id>
        <name>3</name>
        <sequence type="described" ref="VSP_034557 VSP_034558"/>
    </isoform>
    <isoform>
        <id>Q8W4L0-4</id>
        <name>4</name>
        <sequence type="described" ref="VSP_034559"/>
    </isoform>
</comment>
<comment type="induction">
    <text evidence="4">By touch and during darkness conditions.</text>
</comment>
<comment type="miscellaneous">
    <molecule>Isoform 2</molecule>
    <text evidence="5">May be due to an intron retention.</text>
</comment>
<comment type="miscellaneous">
    <molecule>Isoform 3</molecule>
    <text evidence="5">May be due to an intron retention.</text>
</comment>
<comment type="miscellaneous">
    <molecule>Isoform 4</molecule>
    <text evidence="5">May be due to a competing donor splice site and an exon skipping.</text>
</comment>
<comment type="caution">
    <text evidence="5">Although assigned as a calmodulin family member by Ref.5, it only contains EF-hand domains.</text>
</comment>
<comment type="sequence caution" evidence="5">
    <conflict type="erroneous gene model prediction">
        <sequence resource="EMBL-CDS" id="AAF02826"/>
    </conflict>
</comment>
<proteinExistence type="evidence at transcript level"/>
<gene>
    <name type="primary">CML49</name>
    <name type="ordered locus">At3g10300</name>
    <name type="ORF">F14P13.10</name>
</gene>